<organism>
    <name type="scientific">Streptococcus pneumoniae (strain P1031)</name>
    <dbReference type="NCBI Taxonomy" id="488223"/>
    <lineage>
        <taxon>Bacteria</taxon>
        <taxon>Bacillati</taxon>
        <taxon>Bacillota</taxon>
        <taxon>Bacilli</taxon>
        <taxon>Lactobacillales</taxon>
        <taxon>Streptococcaceae</taxon>
        <taxon>Streptococcus</taxon>
    </lineage>
</organism>
<comment type="function">
    <text evidence="1">One of the early assembly proteins it binds 23S rRNA. One of the proteins that surrounds the polypeptide exit tunnel on the outside of the ribosome. Forms the main docking site for trigger factor binding to the ribosome.</text>
</comment>
<comment type="subunit">
    <text evidence="1">Part of the 50S ribosomal subunit. Contacts protein L29, and trigger factor when it is bound to the ribosome.</text>
</comment>
<comment type="similarity">
    <text evidence="1">Belongs to the universal ribosomal protein uL23 family.</text>
</comment>
<evidence type="ECO:0000255" key="1">
    <source>
        <dbReference type="HAMAP-Rule" id="MF_01369"/>
    </source>
</evidence>
<evidence type="ECO:0000305" key="2"/>
<keyword id="KW-0687">Ribonucleoprotein</keyword>
<keyword id="KW-0689">Ribosomal protein</keyword>
<keyword id="KW-0694">RNA-binding</keyword>
<keyword id="KW-0699">rRNA-binding</keyword>
<proteinExistence type="inferred from homology"/>
<name>RL23_STRZP</name>
<reference key="1">
    <citation type="journal article" date="2010" name="Genome Biol.">
        <title>Structure and dynamics of the pan-genome of Streptococcus pneumoniae and closely related species.</title>
        <authorList>
            <person name="Donati C."/>
            <person name="Hiller N.L."/>
            <person name="Tettelin H."/>
            <person name="Muzzi A."/>
            <person name="Croucher N.J."/>
            <person name="Angiuoli S.V."/>
            <person name="Oggioni M."/>
            <person name="Dunning Hotopp J.C."/>
            <person name="Hu F.Z."/>
            <person name="Riley D.R."/>
            <person name="Covacci A."/>
            <person name="Mitchell T.J."/>
            <person name="Bentley S.D."/>
            <person name="Kilian M."/>
            <person name="Ehrlich G.D."/>
            <person name="Rappuoli R."/>
            <person name="Moxon E.R."/>
            <person name="Masignani V."/>
        </authorList>
    </citation>
    <scope>NUCLEOTIDE SEQUENCE [LARGE SCALE GENOMIC DNA]</scope>
    <source>
        <strain>P1031</strain>
    </source>
</reference>
<protein>
    <recommendedName>
        <fullName evidence="1">Large ribosomal subunit protein uL23</fullName>
    </recommendedName>
    <alternativeName>
        <fullName evidence="2">50S ribosomal protein L23</fullName>
    </alternativeName>
</protein>
<feature type="chain" id="PRO_1000184109" description="Large ribosomal subunit protein uL23">
    <location>
        <begin position="1"/>
        <end position="98"/>
    </location>
</feature>
<dbReference type="EMBL" id="CP000920">
    <property type="protein sequence ID" value="ACO22048.1"/>
    <property type="molecule type" value="Genomic_DNA"/>
</dbReference>
<dbReference type="RefSeq" id="WP_001055347.1">
    <property type="nucleotide sequence ID" value="NC_012467.1"/>
</dbReference>
<dbReference type="SMR" id="C1CI99"/>
<dbReference type="KEGG" id="spp:SPP_0262"/>
<dbReference type="HOGENOM" id="CLU_037562_3_2_9"/>
<dbReference type="GO" id="GO:1990904">
    <property type="term" value="C:ribonucleoprotein complex"/>
    <property type="evidence" value="ECO:0007669"/>
    <property type="project" value="UniProtKB-KW"/>
</dbReference>
<dbReference type="GO" id="GO:0005840">
    <property type="term" value="C:ribosome"/>
    <property type="evidence" value="ECO:0007669"/>
    <property type="project" value="UniProtKB-KW"/>
</dbReference>
<dbReference type="GO" id="GO:0019843">
    <property type="term" value="F:rRNA binding"/>
    <property type="evidence" value="ECO:0007669"/>
    <property type="project" value="UniProtKB-UniRule"/>
</dbReference>
<dbReference type="GO" id="GO:0003735">
    <property type="term" value="F:structural constituent of ribosome"/>
    <property type="evidence" value="ECO:0007669"/>
    <property type="project" value="InterPro"/>
</dbReference>
<dbReference type="GO" id="GO:0006412">
    <property type="term" value="P:translation"/>
    <property type="evidence" value="ECO:0007669"/>
    <property type="project" value="UniProtKB-UniRule"/>
</dbReference>
<dbReference type="FunFam" id="3.30.70.330:FF:000001">
    <property type="entry name" value="50S ribosomal protein L23"/>
    <property type="match status" value="1"/>
</dbReference>
<dbReference type="Gene3D" id="3.30.70.330">
    <property type="match status" value="1"/>
</dbReference>
<dbReference type="HAMAP" id="MF_01369_B">
    <property type="entry name" value="Ribosomal_uL23_B"/>
    <property type="match status" value="1"/>
</dbReference>
<dbReference type="InterPro" id="IPR012677">
    <property type="entry name" value="Nucleotide-bd_a/b_plait_sf"/>
</dbReference>
<dbReference type="InterPro" id="IPR013025">
    <property type="entry name" value="Ribosomal_uL23-like"/>
</dbReference>
<dbReference type="InterPro" id="IPR012678">
    <property type="entry name" value="Ribosomal_uL23/eL15/eS24_sf"/>
</dbReference>
<dbReference type="InterPro" id="IPR001014">
    <property type="entry name" value="Ribosomal_uL23_CS"/>
</dbReference>
<dbReference type="NCBIfam" id="NF004361">
    <property type="entry name" value="PRK05738.2-1"/>
    <property type="match status" value="1"/>
</dbReference>
<dbReference type="NCBIfam" id="NF004363">
    <property type="entry name" value="PRK05738.2-4"/>
    <property type="match status" value="1"/>
</dbReference>
<dbReference type="PANTHER" id="PTHR11620">
    <property type="entry name" value="60S RIBOSOMAL PROTEIN L23A"/>
    <property type="match status" value="1"/>
</dbReference>
<dbReference type="Pfam" id="PF00276">
    <property type="entry name" value="Ribosomal_L23"/>
    <property type="match status" value="1"/>
</dbReference>
<dbReference type="SUPFAM" id="SSF54189">
    <property type="entry name" value="Ribosomal proteins S24e, L23 and L15e"/>
    <property type="match status" value="1"/>
</dbReference>
<dbReference type="PROSITE" id="PS00050">
    <property type="entry name" value="RIBOSOMAL_L23"/>
    <property type="match status" value="1"/>
</dbReference>
<accession>C1CI99</accession>
<sequence length="98" mass="10786">MNLYDVIKKPVITESSMAQLEAGKYVFEVDTRAHKLLIKQAVEAAFEGVKVANVNTINVKPKAKRVGRYTGFTNKTKKAIITLTADSKAIELFAAEAE</sequence>
<gene>
    <name evidence="1" type="primary">rplW</name>
    <name type="ordered locus">SPP_0262</name>
</gene>